<proteinExistence type="inferred from homology"/>
<sequence>MRPAGRSANQVRPVTLTRNYTKHAEGSVLVEFGDTKVLCTASIDEGVPRFLKGQGQGWITAEYGMLPRSTHTRNAREAAKGKQGGRTMEIQRLIARALRAAVDLKALGEFTITLDCDVLQADGGTRTASITGACVALADALNKLVAAGKLKTNPMKGMVAAVSVGIVNGEAICDLEYIEDSAAETDMNVVMTEDGRIIEVQGTAEGEPFTHEELLTLLALARGGIESIITTQKAALEN</sequence>
<dbReference type="EC" id="2.7.7.56" evidence="1"/>
<dbReference type="EMBL" id="CP000964">
    <property type="protein sequence ID" value="ACI10611.1"/>
    <property type="molecule type" value="Genomic_DNA"/>
</dbReference>
<dbReference type="SMR" id="B5XTF9"/>
<dbReference type="KEGG" id="kpe:KPK_0110"/>
<dbReference type="HOGENOM" id="CLU_050858_0_0_6"/>
<dbReference type="Proteomes" id="UP000001734">
    <property type="component" value="Chromosome"/>
</dbReference>
<dbReference type="GO" id="GO:0000175">
    <property type="term" value="F:3'-5'-RNA exonuclease activity"/>
    <property type="evidence" value="ECO:0007669"/>
    <property type="project" value="UniProtKB-UniRule"/>
</dbReference>
<dbReference type="GO" id="GO:0000049">
    <property type="term" value="F:tRNA binding"/>
    <property type="evidence" value="ECO:0007669"/>
    <property type="project" value="UniProtKB-UniRule"/>
</dbReference>
<dbReference type="GO" id="GO:0009022">
    <property type="term" value="F:tRNA nucleotidyltransferase activity"/>
    <property type="evidence" value="ECO:0007669"/>
    <property type="project" value="UniProtKB-UniRule"/>
</dbReference>
<dbReference type="GO" id="GO:0016075">
    <property type="term" value="P:rRNA catabolic process"/>
    <property type="evidence" value="ECO:0007669"/>
    <property type="project" value="UniProtKB-UniRule"/>
</dbReference>
<dbReference type="GO" id="GO:0006364">
    <property type="term" value="P:rRNA processing"/>
    <property type="evidence" value="ECO:0007669"/>
    <property type="project" value="UniProtKB-KW"/>
</dbReference>
<dbReference type="GO" id="GO:0008033">
    <property type="term" value="P:tRNA processing"/>
    <property type="evidence" value="ECO:0007669"/>
    <property type="project" value="UniProtKB-UniRule"/>
</dbReference>
<dbReference type="CDD" id="cd11362">
    <property type="entry name" value="RNase_PH_bact"/>
    <property type="match status" value="1"/>
</dbReference>
<dbReference type="FunFam" id="3.30.230.70:FF:000003">
    <property type="entry name" value="Ribonuclease PH"/>
    <property type="match status" value="1"/>
</dbReference>
<dbReference type="Gene3D" id="3.30.230.70">
    <property type="entry name" value="GHMP Kinase, N-terminal domain"/>
    <property type="match status" value="1"/>
</dbReference>
<dbReference type="HAMAP" id="MF_00564">
    <property type="entry name" value="RNase_PH"/>
    <property type="match status" value="1"/>
</dbReference>
<dbReference type="InterPro" id="IPR001247">
    <property type="entry name" value="ExoRNase_PH_dom1"/>
</dbReference>
<dbReference type="InterPro" id="IPR015847">
    <property type="entry name" value="ExoRNase_PH_dom2"/>
</dbReference>
<dbReference type="InterPro" id="IPR036345">
    <property type="entry name" value="ExoRNase_PH_dom2_sf"/>
</dbReference>
<dbReference type="InterPro" id="IPR027408">
    <property type="entry name" value="PNPase/RNase_PH_dom_sf"/>
</dbReference>
<dbReference type="InterPro" id="IPR020568">
    <property type="entry name" value="Ribosomal_Su5_D2-typ_SF"/>
</dbReference>
<dbReference type="InterPro" id="IPR050080">
    <property type="entry name" value="RNase_PH"/>
</dbReference>
<dbReference type="InterPro" id="IPR002381">
    <property type="entry name" value="RNase_PH_bac-type"/>
</dbReference>
<dbReference type="InterPro" id="IPR018336">
    <property type="entry name" value="RNase_PH_CS"/>
</dbReference>
<dbReference type="NCBIfam" id="TIGR01966">
    <property type="entry name" value="RNasePH"/>
    <property type="match status" value="1"/>
</dbReference>
<dbReference type="PANTHER" id="PTHR11953">
    <property type="entry name" value="EXOSOME COMPLEX COMPONENT"/>
    <property type="match status" value="1"/>
</dbReference>
<dbReference type="PANTHER" id="PTHR11953:SF0">
    <property type="entry name" value="EXOSOME COMPLEX COMPONENT RRP41"/>
    <property type="match status" value="1"/>
</dbReference>
<dbReference type="Pfam" id="PF01138">
    <property type="entry name" value="RNase_PH"/>
    <property type="match status" value="1"/>
</dbReference>
<dbReference type="Pfam" id="PF03725">
    <property type="entry name" value="RNase_PH_C"/>
    <property type="match status" value="1"/>
</dbReference>
<dbReference type="SUPFAM" id="SSF55666">
    <property type="entry name" value="Ribonuclease PH domain 2-like"/>
    <property type="match status" value="1"/>
</dbReference>
<dbReference type="SUPFAM" id="SSF54211">
    <property type="entry name" value="Ribosomal protein S5 domain 2-like"/>
    <property type="match status" value="1"/>
</dbReference>
<dbReference type="PROSITE" id="PS01277">
    <property type="entry name" value="RIBONUCLEASE_PH"/>
    <property type="match status" value="1"/>
</dbReference>
<accession>B5XTF9</accession>
<evidence type="ECO:0000255" key="1">
    <source>
        <dbReference type="HAMAP-Rule" id="MF_00564"/>
    </source>
</evidence>
<feature type="chain" id="PRO_1000129348" description="Ribonuclease PH">
    <location>
        <begin position="1"/>
        <end position="238"/>
    </location>
</feature>
<feature type="binding site" evidence="1">
    <location>
        <position position="86"/>
    </location>
    <ligand>
        <name>phosphate</name>
        <dbReference type="ChEBI" id="CHEBI:43474"/>
        <note>substrate</note>
    </ligand>
</feature>
<feature type="binding site" evidence="1">
    <location>
        <begin position="124"/>
        <end position="126"/>
    </location>
    <ligand>
        <name>phosphate</name>
        <dbReference type="ChEBI" id="CHEBI:43474"/>
        <note>substrate</note>
    </ligand>
</feature>
<organism>
    <name type="scientific">Klebsiella pneumoniae (strain 342)</name>
    <dbReference type="NCBI Taxonomy" id="507522"/>
    <lineage>
        <taxon>Bacteria</taxon>
        <taxon>Pseudomonadati</taxon>
        <taxon>Pseudomonadota</taxon>
        <taxon>Gammaproteobacteria</taxon>
        <taxon>Enterobacterales</taxon>
        <taxon>Enterobacteriaceae</taxon>
        <taxon>Klebsiella/Raoultella group</taxon>
        <taxon>Klebsiella</taxon>
        <taxon>Klebsiella pneumoniae complex</taxon>
    </lineage>
</organism>
<reference key="1">
    <citation type="journal article" date="2008" name="PLoS Genet.">
        <title>Complete genome sequence of the N2-fixing broad host range endophyte Klebsiella pneumoniae 342 and virulence predictions verified in mice.</title>
        <authorList>
            <person name="Fouts D.E."/>
            <person name="Tyler H.L."/>
            <person name="DeBoy R.T."/>
            <person name="Daugherty S."/>
            <person name="Ren Q."/>
            <person name="Badger J.H."/>
            <person name="Durkin A.S."/>
            <person name="Huot H."/>
            <person name="Shrivastava S."/>
            <person name="Kothari S."/>
            <person name="Dodson R.J."/>
            <person name="Mohamoud Y."/>
            <person name="Khouri H."/>
            <person name="Roesch L.F.W."/>
            <person name="Krogfelt K.A."/>
            <person name="Struve C."/>
            <person name="Triplett E.W."/>
            <person name="Methe B.A."/>
        </authorList>
    </citation>
    <scope>NUCLEOTIDE SEQUENCE [LARGE SCALE GENOMIC DNA]</scope>
    <source>
        <strain>342</strain>
    </source>
</reference>
<name>RNPH_KLEP3</name>
<keyword id="KW-0548">Nucleotidyltransferase</keyword>
<keyword id="KW-0694">RNA-binding</keyword>
<keyword id="KW-0698">rRNA processing</keyword>
<keyword id="KW-0808">Transferase</keyword>
<keyword id="KW-0819">tRNA processing</keyword>
<keyword id="KW-0820">tRNA-binding</keyword>
<gene>
    <name evidence="1" type="primary">rph</name>
    <name type="ordered locus">KPK_0110</name>
</gene>
<protein>
    <recommendedName>
        <fullName evidence="1">Ribonuclease PH</fullName>
        <shortName evidence="1">RNase PH</shortName>
        <ecNumber evidence="1">2.7.7.56</ecNumber>
    </recommendedName>
    <alternativeName>
        <fullName evidence="1">tRNA nucleotidyltransferase</fullName>
    </alternativeName>
</protein>
<comment type="function">
    <text evidence="1">Phosphorolytic 3'-5' exoribonuclease that plays an important role in tRNA 3'-end maturation. Removes nucleotide residues following the 3'-CCA terminus of tRNAs; can also add nucleotides to the ends of RNA molecules by using nucleoside diphosphates as substrates, but this may not be physiologically important. Probably plays a role in initiation of 16S rRNA degradation (leading to ribosome degradation) during starvation.</text>
</comment>
<comment type="catalytic activity">
    <reaction evidence="1">
        <text>tRNA(n+1) + phosphate = tRNA(n) + a ribonucleoside 5'-diphosphate</text>
        <dbReference type="Rhea" id="RHEA:10628"/>
        <dbReference type="Rhea" id="RHEA-COMP:17343"/>
        <dbReference type="Rhea" id="RHEA-COMP:17344"/>
        <dbReference type="ChEBI" id="CHEBI:43474"/>
        <dbReference type="ChEBI" id="CHEBI:57930"/>
        <dbReference type="ChEBI" id="CHEBI:173114"/>
        <dbReference type="EC" id="2.7.7.56"/>
    </reaction>
</comment>
<comment type="subunit">
    <text evidence="1">Homohexameric ring arranged as a trimer of dimers.</text>
</comment>
<comment type="similarity">
    <text evidence="1">Belongs to the RNase PH family.</text>
</comment>